<organism>
    <name type="scientific">Escherichia coli O6:H1 (strain CFT073 / ATCC 700928 / UPEC)</name>
    <dbReference type="NCBI Taxonomy" id="199310"/>
    <lineage>
        <taxon>Bacteria</taxon>
        <taxon>Pseudomonadati</taxon>
        <taxon>Pseudomonadota</taxon>
        <taxon>Gammaproteobacteria</taxon>
        <taxon>Enterobacterales</taxon>
        <taxon>Enterobacteriaceae</taxon>
        <taxon>Escherichia</taxon>
    </lineage>
</organism>
<sequence length="216" mass="23927">MSNQEPATILLIDDHPMLRTGVKQLISMAPDITVVGEASNGEQGIELAESLDPDLILLDLNMPGMNGLETLDKLREKSLSGRIVVFSVSNHEEDVVTALKRGADGYLLKDMEPEDLLKALHQAAAGEMVLSEALTPVLAASLRANRATTERDVNQLTPRERDILKLIAQGLPNKMIARRLDITESTVKVHVKHMLKKMKLKSRVEAAVWVHQERIF</sequence>
<dbReference type="EMBL" id="AE014075">
    <property type="protein sequence ID" value="AAN80148.1"/>
    <property type="status" value="ALT_INIT"/>
    <property type="molecule type" value="Genomic_DNA"/>
</dbReference>
<dbReference type="RefSeq" id="WP_000070491.1">
    <property type="nucleotide sequence ID" value="NZ_CP051263.1"/>
</dbReference>
<dbReference type="SMR" id="P0AF29"/>
<dbReference type="STRING" id="199310.c1681"/>
<dbReference type="GeneID" id="93775289"/>
<dbReference type="KEGG" id="ecc:c1681"/>
<dbReference type="eggNOG" id="COG2197">
    <property type="taxonomic scope" value="Bacteria"/>
</dbReference>
<dbReference type="HOGENOM" id="CLU_000445_90_8_6"/>
<dbReference type="Proteomes" id="UP000001410">
    <property type="component" value="Chromosome"/>
</dbReference>
<dbReference type="GO" id="GO:0005524">
    <property type="term" value="F:ATP binding"/>
    <property type="evidence" value="ECO:0007669"/>
    <property type="project" value="UniProtKB-KW"/>
</dbReference>
<dbReference type="GO" id="GO:0003677">
    <property type="term" value="F:DNA binding"/>
    <property type="evidence" value="ECO:0007669"/>
    <property type="project" value="UniProtKB-KW"/>
</dbReference>
<dbReference type="GO" id="GO:0042128">
    <property type="term" value="P:nitrate assimilation"/>
    <property type="evidence" value="ECO:0007669"/>
    <property type="project" value="UniProtKB-KW"/>
</dbReference>
<dbReference type="GO" id="GO:0000160">
    <property type="term" value="P:phosphorelay signal transduction system"/>
    <property type="evidence" value="ECO:0007669"/>
    <property type="project" value="UniProtKB-KW"/>
</dbReference>
<dbReference type="GO" id="GO:0006355">
    <property type="term" value="P:regulation of DNA-templated transcription"/>
    <property type="evidence" value="ECO:0007669"/>
    <property type="project" value="InterPro"/>
</dbReference>
<dbReference type="CDD" id="cd06170">
    <property type="entry name" value="LuxR_C_like"/>
    <property type="match status" value="1"/>
</dbReference>
<dbReference type="CDD" id="cd19931">
    <property type="entry name" value="REC_NarL"/>
    <property type="match status" value="1"/>
</dbReference>
<dbReference type="FunFam" id="1.10.10.10:FF:000103">
    <property type="entry name" value="Two-component system response regulator NarL"/>
    <property type="match status" value="1"/>
</dbReference>
<dbReference type="FunFam" id="3.40.50.2300:FF:000044">
    <property type="entry name" value="Two-component system response regulator NarL"/>
    <property type="match status" value="1"/>
</dbReference>
<dbReference type="Gene3D" id="3.40.50.2300">
    <property type="match status" value="1"/>
</dbReference>
<dbReference type="Gene3D" id="1.10.10.10">
    <property type="entry name" value="Winged helix-like DNA-binding domain superfamily/Winged helix DNA-binding domain"/>
    <property type="match status" value="1"/>
</dbReference>
<dbReference type="InterPro" id="IPR011006">
    <property type="entry name" value="CheY-like_superfamily"/>
</dbReference>
<dbReference type="InterPro" id="IPR016032">
    <property type="entry name" value="Sig_transdc_resp-reg_C-effctor"/>
</dbReference>
<dbReference type="InterPro" id="IPR001789">
    <property type="entry name" value="Sig_transdc_resp-reg_receiver"/>
</dbReference>
<dbReference type="InterPro" id="IPR000792">
    <property type="entry name" value="Tscrpt_reg_LuxR_C"/>
</dbReference>
<dbReference type="InterPro" id="IPR039420">
    <property type="entry name" value="WalR-like"/>
</dbReference>
<dbReference type="InterPro" id="IPR036388">
    <property type="entry name" value="WH-like_DNA-bd_sf"/>
</dbReference>
<dbReference type="NCBIfam" id="NF007935">
    <property type="entry name" value="PRK10651.1"/>
    <property type="match status" value="1"/>
</dbReference>
<dbReference type="PANTHER" id="PTHR43214:SF38">
    <property type="entry name" value="NITRATE_NITRITE RESPONSE REGULATOR PROTEIN NARL"/>
    <property type="match status" value="1"/>
</dbReference>
<dbReference type="PANTHER" id="PTHR43214">
    <property type="entry name" value="TWO-COMPONENT RESPONSE REGULATOR"/>
    <property type="match status" value="1"/>
</dbReference>
<dbReference type="Pfam" id="PF00196">
    <property type="entry name" value="GerE"/>
    <property type="match status" value="1"/>
</dbReference>
<dbReference type="Pfam" id="PF00072">
    <property type="entry name" value="Response_reg"/>
    <property type="match status" value="1"/>
</dbReference>
<dbReference type="PRINTS" id="PR00038">
    <property type="entry name" value="HTHLUXR"/>
</dbReference>
<dbReference type="SMART" id="SM00421">
    <property type="entry name" value="HTH_LUXR"/>
    <property type="match status" value="1"/>
</dbReference>
<dbReference type="SMART" id="SM00448">
    <property type="entry name" value="REC"/>
    <property type="match status" value="1"/>
</dbReference>
<dbReference type="SUPFAM" id="SSF46894">
    <property type="entry name" value="C-terminal effector domain of the bipartite response regulators"/>
    <property type="match status" value="1"/>
</dbReference>
<dbReference type="SUPFAM" id="SSF52172">
    <property type="entry name" value="CheY-like"/>
    <property type="match status" value="1"/>
</dbReference>
<dbReference type="PROSITE" id="PS00622">
    <property type="entry name" value="HTH_LUXR_1"/>
    <property type="match status" value="1"/>
</dbReference>
<dbReference type="PROSITE" id="PS50043">
    <property type="entry name" value="HTH_LUXR_2"/>
    <property type="match status" value="1"/>
</dbReference>
<dbReference type="PROSITE" id="PS50110">
    <property type="entry name" value="RESPONSE_REGULATORY"/>
    <property type="match status" value="1"/>
</dbReference>
<name>NARL_ECOL6</name>
<evidence type="ECO:0000250" key="1"/>
<evidence type="ECO:0000255" key="2">
    <source>
        <dbReference type="PROSITE-ProRule" id="PRU00169"/>
    </source>
</evidence>
<evidence type="ECO:0000255" key="3">
    <source>
        <dbReference type="PROSITE-ProRule" id="PRU00411"/>
    </source>
</evidence>
<evidence type="ECO:0000305" key="4"/>
<gene>
    <name type="primary">narL</name>
    <name type="ordered locus">c1681</name>
</gene>
<feature type="chain" id="PRO_0000081147" description="Nitrate/nitrite response regulator protein NarL">
    <location>
        <begin position="1"/>
        <end position="216"/>
    </location>
</feature>
<feature type="domain" description="Response regulatory" evidence="2">
    <location>
        <begin position="8"/>
        <end position="124"/>
    </location>
</feature>
<feature type="domain" description="HTH luxR-type" evidence="3">
    <location>
        <begin position="149"/>
        <end position="214"/>
    </location>
</feature>
<feature type="DNA-binding region" description="H-T-H motif" evidence="3">
    <location>
        <begin position="173"/>
        <end position="192"/>
    </location>
</feature>
<feature type="modified residue" description="4-aspartylphosphate" evidence="2">
    <location>
        <position position="59"/>
    </location>
</feature>
<protein>
    <recommendedName>
        <fullName>Nitrate/nitrite response regulator protein NarL</fullName>
    </recommendedName>
</protein>
<proteinExistence type="inferred from homology"/>
<comment type="function">
    <text evidence="1">This protein activates the expression of the nitrate reductase (narGHJI) and formate dehydrogenase-N (fdnGHI) operons and represses the transcription of the fumarate reductase (frdABCD) operon in response to a nitrate/nitrite induction signal transmitted by either the NarX or NarQ proteins.</text>
</comment>
<comment type="sequence caution" evidence="4">
    <conflict type="erroneous initiation">
        <sequence resource="EMBL-CDS" id="AAN80148"/>
    </conflict>
</comment>
<keyword id="KW-0010">Activator</keyword>
<keyword id="KW-0067">ATP-binding</keyword>
<keyword id="KW-0238">DNA-binding</keyword>
<keyword id="KW-0534">Nitrate assimilation</keyword>
<keyword id="KW-0547">Nucleotide-binding</keyword>
<keyword id="KW-0597">Phosphoprotein</keyword>
<keyword id="KW-1185">Reference proteome</keyword>
<keyword id="KW-0678">Repressor</keyword>
<keyword id="KW-0804">Transcription</keyword>
<keyword id="KW-0805">Transcription regulation</keyword>
<keyword id="KW-0902">Two-component regulatory system</keyword>
<accession>P0AF29</accession>
<accession>P10957</accession>
<reference key="1">
    <citation type="journal article" date="2002" name="Proc. Natl. Acad. Sci. U.S.A.">
        <title>Extensive mosaic structure revealed by the complete genome sequence of uropathogenic Escherichia coli.</title>
        <authorList>
            <person name="Welch R.A."/>
            <person name="Burland V."/>
            <person name="Plunkett G. III"/>
            <person name="Redford P."/>
            <person name="Roesch P."/>
            <person name="Rasko D."/>
            <person name="Buckles E.L."/>
            <person name="Liou S.-R."/>
            <person name="Boutin A."/>
            <person name="Hackett J."/>
            <person name="Stroud D."/>
            <person name="Mayhew G.F."/>
            <person name="Rose D.J."/>
            <person name="Zhou S."/>
            <person name="Schwartz D.C."/>
            <person name="Perna N.T."/>
            <person name="Mobley H.L.T."/>
            <person name="Donnenberg M.S."/>
            <person name="Blattner F.R."/>
        </authorList>
    </citation>
    <scope>NUCLEOTIDE SEQUENCE [LARGE SCALE GENOMIC DNA]</scope>
    <source>
        <strain>CFT073 / ATCC 700928 / UPEC</strain>
    </source>
</reference>